<name>PSAM_SYNR3</name>
<proteinExistence type="inferred from homology"/>
<keyword id="KW-0472">Membrane</keyword>
<keyword id="KW-0602">Photosynthesis</keyword>
<keyword id="KW-0603">Photosystem I</keyword>
<keyword id="KW-1185">Reference proteome</keyword>
<keyword id="KW-0793">Thylakoid</keyword>
<keyword id="KW-0812">Transmembrane</keyword>
<keyword id="KW-1133">Transmembrane helix</keyword>
<protein>
    <recommendedName>
        <fullName evidence="1">Photosystem I reaction center subunit XII</fullName>
    </recommendedName>
    <alternativeName>
        <fullName evidence="1">PSI-M</fullName>
    </alternativeName>
</protein>
<reference key="1">
    <citation type="submission" date="2006-05" db="EMBL/GenBank/DDBJ databases">
        <authorList>
            <consortium name="Genoscope"/>
        </authorList>
    </citation>
    <scope>NUCLEOTIDE SEQUENCE [LARGE SCALE GENOMIC DNA]</scope>
    <source>
        <strain>RCC307</strain>
    </source>
</reference>
<feature type="chain" id="PRO_1000062717" description="Photosystem I reaction center subunit XII">
    <location>
        <begin position="1"/>
        <end position="34"/>
    </location>
</feature>
<feature type="transmembrane region" description="Helical" evidence="1">
    <location>
        <begin position="10"/>
        <end position="32"/>
    </location>
</feature>
<comment type="subcellular location">
    <subcellularLocation>
        <location evidence="1">Cellular thylakoid membrane</location>
        <topology evidence="1">Single-pass membrane protein</topology>
    </subcellularLocation>
</comment>
<comment type="similarity">
    <text evidence="1">Belongs to the PsaM family.</text>
</comment>
<gene>
    <name evidence="1" type="primary">psaM</name>
    <name type="ordered locus">SynRCC307_1574</name>
</gene>
<sequence length="34" mass="3631">MATVLSQSEIYIALVVAAHAAILALRLSVSLYRS</sequence>
<dbReference type="EMBL" id="CT978603">
    <property type="protein sequence ID" value="CAK28477.1"/>
    <property type="molecule type" value="Genomic_DNA"/>
</dbReference>
<dbReference type="SMR" id="A5GUB8"/>
<dbReference type="STRING" id="316278.SynRCC307_1574"/>
<dbReference type="KEGG" id="syr:SynRCC307_1574"/>
<dbReference type="HOGENOM" id="CLU_215773_1_0_3"/>
<dbReference type="Proteomes" id="UP000001115">
    <property type="component" value="Chromosome"/>
</dbReference>
<dbReference type="GO" id="GO:0009522">
    <property type="term" value="C:photosystem I"/>
    <property type="evidence" value="ECO:0007669"/>
    <property type="project" value="UniProtKB-KW"/>
</dbReference>
<dbReference type="GO" id="GO:0031676">
    <property type="term" value="C:plasma membrane-derived thylakoid membrane"/>
    <property type="evidence" value="ECO:0007669"/>
    <property type="project" value="UniProtKB-SubCell"/>
</dbReference>
<dbReference type="GO" id="GO:0015979">
    <property type="term" value="P:photosynthesis"/>
    <property type="evidence" value="ECO:0007669"/>
    <property type="project" value="UniProtKB-UniRule"/>
</dbReference>
<dbReference type="HAMAP" id="MF_00828">
    <property type="entry name" value="PSI_PsaM"/>
    <property type="match status" value="1"/>
</dbReference>
<dbReference type="InterPro" id="IPR010010">
    <property type="entry name" value="PSI_PsaM"/>
</dbReference>
<dbReference type="InterPro" id="IPR037279">
    <property type="entry name" value="PSI_PsaM_sf"/>
</dbReference>
<dbReference type="NCBIfam" id="TIGR03053">
    <property type="entry name" value="PS_I_psaM"/>
    <property type="match status" value="1"/>
</dbReference>
<dbReference type="Pfam" id="PF07465">
    <property type="entry name" value="PsaM"/>
    <property type="match status" value="1"/>
</dbReference>
<dbReference type="SUPFAM" id="SSF81548">
    <property type="entry name" value="Subunit XII of photosystem I reaction centre, PsaM"/>
    <property type="match status" value="1"/>
</dbReference>
<evidence type="ECO:0000255" key="1">
    <source>
        <dbReference type="HAMAP-Rule" id="MF_00828"/>
    </source>
</evidence>
<accession>A5GUB8</accession>
<organism>
    <name type="scientific">Synechococcus sp. (strain RCC307)</name>
    <dbReference type="NCBI Taxonomy" id="316278"/>
    <lineage>
        <taxon>Bacteria</taxon>
        <taxon>Bacillati</taxon>
        <taxon>Cyanobacteriota</taxon>
        <taxon>Cyanophyceae</taxon>
        <taxon>Synechococcales</taxon>
        <taxon>Synechococcaceae</taxon>
        <taxon>Synechococcus</taxon>
    </lineage>
</organism>